<feature type="signal peptide" evidence="2">
    <location>
        <begin position="1"/>
        <end position="19"/>
    </location>
</feature>
<feature type="propeptide" id="PRO_0000425177" evidence="1">
    <location>
        <begin position="20"/>
        <end position="37"/>
    </location>
</feature>
<feature type="peptide" id="PRO_0000425178" description="Conotoxin Vc6.14">
    <location>
        <begin position="41"/>
        <end position="77"/>
    </location>
</feature>
<feature type="disulfide bond" evidence="1">
    <location>
        <begin position="51"/>
        <end position="65"/>
    </location>
</feature>
<feature type="disulfide bond" evidence="1">
    <location>
        <begin position="58"/>
        <end position="69"/>
    </location>
</feature>
<feature type="disulfide bond" evidence="1">
    <location>
        <begin position="64"/>
        <end position="74"/>
    </location>
</feature>
<dbReference type="EMBL" id="JF433907">
    <property type="protein sequence ID" value="AEA35363.1"/>
    <property type="molecule type" value="mRNA"/>
</dbReference>
<dbReference type="ConoServer" id="4275">
    <property type="toxin name" value="Vc6.14 precursor"/>
</dbReference>
<dbReference type="GO" id="GO:0005576">
    <property type="term" value="C:extracellular region"/>
    <property type="evidence" value="ECO:0007669"/>
    <property type="project" value="UniProtKB-SubCell"/>
</dbReference>
<dbReference type="GO" id="GO:0008200">
    <property type="term" value="F:ion channel inhibitor activity"/>
    <property type="evidence" value="ECO:0007669"/>
    <property type="project" value="InterPro"/>
</dbReference>
<dbReference type="GO" id="GO:0090729">
    <property type="term" value="F:toxin activity"/>
    <property type="evidence" value="ECO:0007669"/>
    <property type="project" value="UniProtKB-KW"/>
</dbReference>
<dbReference type="InterPro" id="IPR004214">
    <property type="entry name" value="Conotoxin"/>
</dbReference>
<dbReference type="Pfam" id="PF02950">
    <property type="entry name" value="Conotoxin"/>
    <property type="match status" value="1"/>
</dbReference>
<protein>
    <recommendedName>
        <fullName>Conotoxin Vc6.14</fullName>
    </recommendedName>
</protein>
<keyword id="KW-0165">Cleavage on pair of basic residues</keyword>
<keyword id="KW-1015">Disulfide bond</keyword>
<keyword id="KW-0872">Ion channel impairing toxin</keyword>
<keyword id="KW-0960">Knottin</keyword>
<keyword id="KW-0964">Secreted</keyword>
<keyword id="KW-0732">Signal</keyword>
<keyword id="KW-0800">Toxin</keyword>
<reference key="1">
    <citation type="journal article" date="2011" name="J. Biol. Chem.">
        <title>Embryonic toxin expression in the cone snail Conus victoriae: primed to kill or divergent function?</title>
        <authorList>
            <person name="Safavi-Hemami H."/>
            <person name="Siero W.A."/>
            <person name="Kuang Z."/>
            <person name="Williamson N.A."/>
            <person name="Karas J.A."/>
            <person name="Page L.R."/>
            <person name="Macmillan D."/>
            <person name="Callaghan B."/>
            <person name="Kompella S.N."/>
            <person name="Adams D.J."/>
            <person name="Norton R.S."/>
            <person name="Purcell A.W."/>
        </authorList>
    </citation>
    <scope>NUCLEOTIDE SEQUENCE [MRNA]</scope>
    <scope>DEVELOPMENTAL STAGE</scope>
    <source>
        <tissue>Embryo</tissue>
        <tissue>Venom duct</tissue>
    </source>
</reference>
<comment type="function">
    <text evidence="1">Inhibits voltage-gated ion channels.</text>
</comment>
<comment type="subcellular location">
    <subcellularLocation>
        <location evidence="1">Secreted</location>
    </subcellularLocation>
</comment>
<comment type="tissue specificity">
    <text>Expressed by the venom duct.</text>
</comment>
<comment type="developmental stage">
    <text evidence="3">Only expressed in embryos.</text>
</comment>
<comment type="domain">
    <text evidence="1">The presence of a 'disulfide through disulfide knot' structurally defines this protein as a knottin.</text>
</comment>
<comment type="domain">
    <text>The cysteine framework is VI/VII (C-C-CC-C-C).</text>
</comment>
<comment type="similarity">
    <text evidence="4">Belongs to the conotoxin O2 superfamily.</text>
</comment>
<sequence>MEKLTILLLVAAVLMSTQAMFQGGGEKRPKDKIKFLSKRKTNAESWWEGECLGWSNGCTQPSDCCSNNCKGRNCDIW</sequence>
<accession>G1AS80</accession>
<organism>
    <name type="scientific">Conus victoriae</name>
    <name type="common">Queen Victoria cone</name>
    <dbReference type="NCBI Taxonomy" id="319920"/>
    <lineage>
        <taxon>Eukaryota</taxon>
        <taxon>Metazoa</taxon>
        <taxon>Spiralia</taxon>
        <taxon>Lophotrochozoa</taxon>
        <taxon>Mollusca</taxon>
        <taxon>Gastropoda</taxon>
        <taxon>Caenogastropoda</taxon>
        <taxon>Neogastropoda</taxon>
        <taxon>Conoidea</taxon>
        <taxon>Conidae</taxon>
        <taxon>Conus</taxon>
        <taxon>Cylinder</taxon>
    </lineage>
</organism>
<evidence type="ECO:0000250" key="1"/>
<evidence type="ECO:0000255" key="2"/>
<evidence type="ECO:0000269" key="3">
    <source>
    </source>
</evidence>
<evidence type="ECO:0000305" key="4"/>
<name>O26E_CONVC</name>
<proteinExistence type="evidence at transcript level"/>